<name>DPH5_ARATH</name>
<keyword id="KW-0489">Methyltransferase</keyword>
<keyword id="KW-1185">Reference proteome</keyword>
<keyword id="KW-0949">S-adenosyl-L-methionine</keyword>
<keyword id="KW-0808">Transferase</keyword>
<organism>
    <name type="scientific">Arabidopsis thaliana</name>
    <name type="common">Mouse-ear cress</name>
    <dbReference type="NCBI Taxonomy" id="3702"/>
    <lineage>
        <taxon>Eukaryota</taxon>
        <taxon>Viridiplantae</taxon>
        <taxon>Streptophyta</taxon>
        <taxon>Embryophyta</taxon>
        <taxon>Tracheophyta</taxon>
        <taxon>Spermatophyta</taxon>
        <taxon>Magnoliopsida</taxon>
        <taxon>eudicotyledons</taxon>
        <taxon>Gunneridae</taxon>
        <taxon>Pentapetalae</taxon>
        <taxon>rosids</taxon>
        <taxon>malvids</taxon>
        <taxon>Brassicales</taxon>
        <taxon>Brassicaceae</taxon>
        <taxon>Camelineae</taxon>
        <taxon>Arabidopsis</taxon>
    </lineage>
</organism>
<accession>O81769</accession>
<comment type="function">
    <text evidence="2">S-adenosyl-L-methionine-dependent methyltransferase that catalyzes four methylations of the modified target histidine residue in translation elongation factor 2 (EF-2), to form an intermediate called diphthine methyl ester. The four successive methylation reactions represent the second step of diphthamide biosynthesis.</text>
</comment>
<comment type="catalytic activity">
    <reaction evidence="2">
        <text>2-[(3S)-amino-3-carboxypropyl]-L-histidyl-[translation elongation factor 2] + 4 S-adenosyl-L-methionine = diphthine methyl ester-[translation elongation factor 2] + 4 S-adenosyl-L-homocysteine + 3 H(+)</text>
        <dbReference type="Rhea" id="RHEA:42652"/>
        <dbReference type="Rhea" id="RHEA-COMP:9749"/>
        <dbReference type="Rhea" id="RHEA-COMP:10173"/>
        <dbReference type="ChEBI" id="CHEBI:15378"/>
        <dbReference type="ChEBI" id="CHEBI:57856"/>
        <dbReference type="ChEBI" id="CHEBI:59789"/>
        <dbReference type="ChEBI" id="CHEBI:73995"/>
        <dbReference type="ChEBI" id="CHEBI:79005"/>
        <dbReference type="EC" id="2.1.1.314"/>
    </reaction>
</comment>
<comment type="pathway">
    <text>Protein modification; peptidyl-diphthamide biosynthesis.</text>
</comment>
<comment type="similarity">
    <text evidence="3">Belongs to the diphthine synthase family.</text>
</comment>
<proteinExistence type="evidence at transcript level"/>
<sequence>MLYIIGLGLGDEKDITLRGLEAVKKSQKVYMEAYTSLLSFGLSADGLSNLEKFYGKPIILADREMVEEKAGDMIDEAIDNDVAFLVVGDPFGATTHSDLVVRAKTLGVKVEVVHNASVMNAVGICGLQLYHYGETVSIPFFTETWRPDSFYEKIKKNRSLGLHTLCLLDIRVKEPTFESLCRGGKKQYEPPRYMSVNTAIEQLLEVEQKHGDSVYGEDTQCVGFARLGSEDQTIVAGTMKQLESVDFGAPLHCLVIVGETHPVEEEMLEFYKYKSGN</sequence>
<dbReference type="EC" id="2.1.1.314"/>
<dbReference type="EMBL" id="AL031004">
    <property type="protein sequence ID" value="CAA19744.1"/>
    <property type="molecule type" value="Genomic_DNA"/>
</dbReference>
<dbReference type="EMBL" id="AL161579">
    <property type="protein sequence ID" value="CAB79897.1"/>
    <property type="molecule type" value="Genomic_DNA"/>
</dbReference>
<dbReference type="EMBL" id="CP002687">
    <property type="protein sequence ID" value="AEE85958.1"/>
    <property type="molecule type" value="Genomic_DNA"/>
</dbReference>
<dbReference type="EMBL" id="CP002687">
    <property type="protein sequence ID" value="AEE85959.1"/>
    <property type="molecule type" value="Genomic_DNA"/>
</dbReference>
<dbReference type="EMBL" id="AF367305">
    <property type="protein sequence ID" value="AAK32892.1"/>
    <property type="molecule type" value="mRNA"/>
</dbReference>
<dbReference type="EMBL" id="AY143884">
    <property type="protein sequence ID" value="AAN28823.1"/>
    <property type="molecule type" value="mRNA"/>
</dbReference>
<dbReference type="PIR" id="T05091">
    <property type="entry name" value="T05091"/>
</dbReference>
<dbReference type="RefSeq" id="NP_194907.1">
    <property type="nucleotide sequence ID" value="NM_119328.4"/>
</dbReference>
<dbReference type="RefSeq" id="NP_974655.1">
    <property type="nucleotide sequence ID" value="NM_202926.2"/>
</dbReference>
<dbReference type="SMR" id="O81769"/>
<dbReference type="FunCoup" id="O81769">
    <property type="interactions" value="4272"/>
</dbReference>
<dbReference type="STRING" id="3702.O81769"/>
<dbReference type="PaxDb" id="3702-AT4G31790.1"/>
<dbReference type="ProteomicsDB" id="241248"/>
<dbReference type="DNASU" id="829307"/>
<dbReference type="EnsemblPlants" id="AT4G31790.1">
    <property type="protein sequence ID" value="AT4G31790.1"/>
    <property type="gene ID" value="AT4G31790"/>
</dbReference>
<dbReference type="EnsemblPlants" id="AT4G31790.2">
    <property type="protein sequence ID" value="AT4G31790.2"/>
    <property type="gene ID" value="AT4G31790"/>
</dbReference>
<dbReference type="GeneID" id="829307"/>
<dbReference type="Gramene" id="AT4G31790.1">
    <property type="protein sequence ID" value="AT4G31790.1"/>
    <property type="gene ID" value="AT4G31790"/>
</dbReference>
<dbReference type="Gramene" id="AT4G31790.2">
    <property type="protein sequence ID" value="AT4G31790.2"/>
    <property type="gene ID" value="AT4G31790"/>
</dbReference>
<dbReference type="KEGG" id="ath:AT4G31790"/>
<dbReference type="Araport" id="AT4G31790"/>
<dbReference type="TAIR" id="AT4G31790"/>
<dbReference type="eggNOG" id="KOG3123">
    <property type="taxonomic scope" value="Eukaryota"/>
</dbReference>
<dbReference type="HOGENOM" id="CLU_066040_1_0_1"/>
<dbReference type="InParanoid" id="O81769"/>
<dbReference type="OMA" id="HNASIMS"/>
<dbReference type="PhylomeDB" id="O81769"/>
<dbReference type="BioCyc" id="ARA:AT4G31790-MONOMER"/>
<dbReference type="UniPathway" id="UPA00559"/>
<dbReference type="PRO" id="PR:O81769"/>
<dbReference type="Proteomes" id="UP000006548">
    <property type="component" value="Chromosome 4"/>
</dbReference>
<dbReference type="ExpressionAtlas" id="O81769">
    <property type="expression patterns" value="baseline and differential"/>
</dbReference>
<dbReference type="GO" id="GO:0141133">
    <property type="term" value="F:diphthine methyl ester synthase activity"/>
    <property type="evidence" value="ECO:0007669"/>
    <property type="project" value="UniProtKB-EC"/>
</dbReference>
<dbReference type="GO" id="GO:0032259">
    <property type="term" value="P:methylation"/>
    <property type="evidence" value="ECO:0007669"/>
    <property type="project" value="UniProtKB-KW"/>
</dbReference>
<dbReference type="GO" id="GO:0017183">
    <property type="term" value="P:protein histidyl modification to diphthamide"/>
    <property type="evidence" value="ECO:0000250"/>
    <property type="project" value="UniProtKB"/>
</dbReference>
<dbReference type="CDD" id="cd11647">
    <property type="entry name" value="DHP5_DphB"/>
    <property type="match status" value="1"/>
</dbReference>
<dbReference type="FunFam" id="3.30.950.10:FF:000004">
    <property type="entry name" value="Diphthine synthase putative"/>
    <property type="match status" value="1"/>
</dbReference>
<dbReference type="FunFam" id="3.40.1010.10:FF:000004">
    <property type="entry name" value="Putative diphthine synthase"/>
    <property type="match status" value="1"/>
</dbReference>
<dbReference type="Gene3D" id="3.40.1010.10">
    <property type="entry name" value="Cobalt-precorrin-4 Transmethylase, Domain 1"/>
    <property type="match status" value="1"/>
</dbReference>
<dbReference type="Gene3D" id="3.30.950.10">
    <property type="entry name" value="Methyltransferase, Cobalt-precorrin-4 Transmethylase, Domain 2"/>
    <property type="match status" value="1"/>
</dbReference>
<dbReference type="HAMAP" id="MF_01084">
    <property type="entry name" value="Diphthine_synth"/>
    <property type="match status" value="1"/>
</dbReference>
<dbReference type="InterPro" id="IPR000878">
    <property type="entry name" value="4pyrrol_Mease"/>
</dbReference>
<dbReference type="InterPro" id="IPR035996">
    <property type="entry name" value="4pyrrol_Methylase_sf"/>
</dbReference>
<dbReference type="InterPro" id="IPR014777">
    <property type="entry name" value="4pyrrole_Mease_sub1"/>
</dbReference>
<dbReference type="InterPro" id="IPR014776">
    <property type="entry name" value="4pyrrole_Mease_sub2"/>
</dbReference>
<dbReference type="InterPro" id="IPR004551">
    <property type="entry name" value="Dphthn_synthase"/>
</dbReference>
<dbReference type="NCBIfam" id="TIGR00522">
    <property type="entry name" value="dph5"/>
    <property type="match status" value="1"/>
</dbReference>
<dbReference type="PANTHER" id="PTHR10882:SF0">
    <property type="entry name" value="DIPHTHINE METHYL ESTER SYNTHASE"/>
    <property type="match status" value="1"/>
</dbReference>
<dbReference type="PANTHER" id="PTHR10882">
    <property type="entry name" value="DIPHTHINE SYNTHASE"/>
    <property type="match status" value="1"/>
</dbReference>
<dbReference type="Pfam" id="PF00590">
    <property type="entry name" value="TP_methylase"/>
    <property type="match status" value="1"/>
</dbReference>
<dbReference type="PIRSF" id="PIRSF036432">
    <property type="entry name" value="Diphthine_synth"/>
    <property type="match status" value="1"/>
</dbReference>
<dbReference type="SUPFAM" id="SSF53790">
    <property type="entry name" value="Tetrapyrrole methylase"/>
    <property type="match status" value="1"/>
</dbReference>
<evidence type="ECO:0000250" key="1"/>
<evidence type="ECO:0000250" key="2">
    <source>
        <dbReference type="UniProtKB" id="P32469"/>
    </source>
</evidence>
<evidence type="ECO:0000305" key="3"/>
<gene>
    <name type="ordered locus">At4g31790</name>
    <name type="ORF">F28M20.20</name>
</gene>
<protein>
    <recommendedName>
        <fullName>Probable diphthine methyl ester synthase</fullName>
        <ecNumber>2.1.1.314</ecNumber>
    </recommendedName>
    <alternativeName>
        <fullName>Diphthamide biosynthesis methyltransferase</fullName>
    </alternativeName>
</protein>
<reference key="1">
    <citation type="journal article" date="1999" name="Nature">
        <title>Sequence and analysis of chromosome 4 of the plant Arabidopsis thaliana.</title>
        <authorList>
            <person name="Mayer K.F.X."/>
            <person name="Schueller C."/>
            <person name="Wambutt R."/>
            <person name="Murphy G."/>
            <person name="Volckaert G."/>
            <person name="Pohl T."/>
            <person name="Duesterhoeft A."/>
            <person name="Stiekema W."/>
            <person name="Entian K.-D."/>
            <person name="Terryn N."/>
            <person name="Harris B."/>
            <person name="Ansorge W."/>
            <person name="Brandt P."/>
            <person name="Grivell L.A."/>
            <person name="Rieger M."/>
            <person name="Weichselgartner M."/>
            <person name="de Simone V."/>
            <person name="Obermaier B."/>
            <person name="Mache R."/>
            <person name="Mueller M."/>
            <person name="Kreis M."/>
            <person name="Delseny M."/>
            <person name="Puigdomenech P."/>
            <person name="Watson M."/>
            <person name="Schmidtheini T."/>
            <person name="Reichert B."/>
            <person name="Portetelle D."/>
            <person name="Perez-Alonso M."/>
            <person name="Boutry M."/>
            <person name="Bancroft I."/>
            <person name="Vos P."/>
            <person name="Hoheisel J."/>
            <person name="Zimmermann W."/>
            <person name="Wedler H."/>
            <person name="Ridley P."/>
            <person name="Langham S.-A."/>
            <person name="McCullagh B."/>
            <person name="Bilham L."/>
            <person name="Robben J."/>
            <person name="van der Schueren J."/>
            <person name="Grymonprez B."/>
            <person name="Chuang Y.-J."/>
            <person name="Vandenbussche F."/>
            <person name="Braeken M."/>
            <person name="Weltjens I."/>
            <person name="Voet M."/>
            <person name="Bastiaens I."/>
            <person name="Aert R."/>
            <person name="Defoor E."/>
            <person name="Weitzenegger T."/>
            <person name="Bothe G."/>
            <person name="Ramsperger U."/>
            <person name="Hilbert H."/>
            <person name="Braun M."/>
            <person name="Holzer E."/>
            <person name="Brandt A."/>
            <person name="Peters S."/>
            <person name="van Staveren M."/>
            <person name="Dirkse W."/>
            <person name="Mooijman P."/>
            <person name="Klein Lankhorst R."/>
            <person name="Rose M."/>
            <person name="Hauf J."/>
            <person name="Koetter P."/>
            <person name="Berneiser S."/>
            <person name="Hempel S."/>
            <person name="Feldpausch M."/>
            <person name="Lamberth S."/>
            <person name="Van den Daele H."/>
            <person name="De Keyser A."/>
            <person name="Buysshaert C."/>
            <person name="Gielen J."/>
            <person name="Villarroel R."/>
            <person name="De Clercq R."/>
            <person name="van Montagu M."/>
            <person name="Rogers J."/>
            <person name="Cronin A."/>
            <person name="Quail M.A."/>
            <person name="Bray-Allen S."/>
            <person name="Clark L."/>
            <person name="Doggett J."/>
            <person name="Hall S."/>
            <person name="Kay M."/>
            <person name="Lennard N."/>
            <person name="McLay K."/>
            <person name="Mayes R."/>
            <person name="Pettett A."/>
            <person name="Rajandream M.A."/>
            <person name="Lyne M."/>
            <person name="Benes V."/>
            <person name="Rechmann S."/>
            <person name="Borkova D."/>
            <person name="Bloecker H."/>
            <person name="Scharfe M."/>
            <person name="Grimm M."/>
            <person name="Loehnert T.-H."/>
            <person name="Dose S."/>
            <person name="de Haan M."/>
            <person name="Maarse A.C."/>
            <person name="Schaefer M."/>
            <person name="Mueller-Auer S."/>
            <person name="Gabel C."/>
            <person name="Fuchs M."/>
            <person name="Fartmann B."/>
            <person name="Granderath K."/>
            <person name="Dauner D."/>
            <person name="Herzl A."/>
            <person name="Neumann S."/>
            <person name="Argiriou A."/>
            <person name="Vitale D."/>
            <person name="Liguori R."/>
            <person name="Piravandi E."/>
            <person name="Massenet O."/>
            <person name="Quigley F."/>
            <person name="Clabauld G."/>
            <person name="Muendlein A."/>
            <person name="Felber R."/>
            <person name="Schnabl S."/>
            <person name="Hiller R."/>
            <person name="Schmidt W."/>
            <person name="Lecharny A."/>
            <person name="Aubourg S."/>
            <person name="Chefdor F."/>
            <person name="Cooke R."/>
            <person name="Berger C."/>
            <person name="Monfort A."/>
            <person name="Casacuberta E."/>
            <person name="Gibbons T."/>
            <person name="Weber N."/>
            <person name="Vandenbol M."/>
            <person name="Bargues M."/>
            <person name="Terol J."/>
            <person name="Torres A."/>
            <person name="Perez-Perez A."/>
            <person name="Purnelle B."/>
            <person name="Bent E."/>
            <person name="Johnson S."/>
            <person name="Tacon D."/>
            <person name="Jesse T."/>
            <person name="Heijnen L."/>
            <person name="Schwarz S."/>
            <person name="Scholler P."/>
            <person name="Heber S."/>
            <person name="Francs P."/>
            <person name="Bielke C."/>
            <person name="Frishman D."/>
            <person name="Haase D."/>
            <person name="Lemcke K."/>
            <person name="Mewes H.-W."/>
            <person name="Stocker S."/>
            <person name="Zaccaria P."/>
            <person name="Bevan M."/>
            <person name="Wilson R.K."/>
            <person name="de la Bastide M."/>
            <person name="Habermann K."/>
            <person name="Parnell L."/>
            <person name="Dedhia N."/>
            <person name="Gnoj L."/>
            <person name="Schutz K."/>
            <person name="Huang E."/>
            <person name="Spiegel L."/>
            <person name="Sekhon M."/>
            <person name="Murray J."/>
            <person name="Sheet P."/>
            <person name="Cordes M."/>
            <person name="Abu-Threideh J."/>
            <person name="Stoneking T."/>
            <person name="Kalicki J."/>
            <person name="Graves T."/>
            <person name="Harmon G."/>
            <person name="Edwards J."/>
            <person name="Latreille P."/>
            <person name="Courtney L."/>
            <person name="Cloud J."/>
            <person name="Abbott A."/>
            <person name="Scott K."/>
            <person name="Johnson D."/>
            <person name="Minx P."/>
            <person name="Bentley D."/>
            <person name="Fulton B."/>
            <person name="Miller N."/>
            <person name="Greco T."/>
            <person name="Kemp K."/>
            <person name="Kramer J."/>
            <person name="Fulton L."/>
            <person name="Mardis E."/>
            <person name="Dante M."/>
            <person name="Pepin K."/>
            <person name="Hillier L.W."/>
            <person name="Nelson J."/>
            <person name="Spieth J."/>
            <person name="Ryan E."/>
            <person name="Andrews S."/>
            <person name="Geisel C."/>
            <person name="Layman D."/>
            <person name="Du H."/>
            <person name="Ali J."/>
            <person name="Berghoff A."/>
            <person name="Jones K."/>
            <person name="Drone K."/>
            <person name="Cotton M."/>
            <person name="Joshu C."/>
            <person name="Antonoiu B."/>
            <person name="Zidanic M."/>
            <person name="Strong C."/>
            <person name="Sun H."/>
            <person name="Lamar B."/>
            <person name="Yordan C."/>
            <person name="Ma P."/>
            <person name="Zhong J."/>
            <person name="Preston R."/>
            <person name="Vil D."/>
            <person name="Shekher M."/>
            <person name="Matero A."/>
            <person name="Shah R."/>
            <person name="Swaby I.K."/>
            <person name="O'Shaughnessy A."/>
            <person name="Rodriguez M."/>
            <person name="Hoffman J."/>
            <person name="Till S."/>
            <person name="Granat S."/>
            <person name="Shohdy N."/>
            <person name="Hasegawa A."/>
            <person name="Hameed A."/>
            <person name="Lodhi M."/>
            <person name="Johnson A."/>
            <person name="Chen E."/>
            <person name="Marra M.A."/>
            <person name="Martienssen R."/>
            <person name="McCombie W.R."/>
        </authorList>
    </citation>
    <scope>NUCLEOTIDE SEQUENCE [LARGE SCALE GENOMIC DNA]</scope>
    <source>
        <strain>cv. Columbia</strain>
    </source>
</reference>
<reference key="2">
    <citation type="journal article" date="2017" name="Plant J.">
        <title>Araport11: a complete reannotation of the Arabidopsis thaliana reference genome.</title>
        <authorList>
            <person name="Cheng C.Y."/>
            <person name="Krishnakumar V."/>
            <person name="Chan A.P."/>
            <person name="Thibaud-Nissen F."/>
            <person name="Schobel S."/>
            <person name="Town C.D."/>
        </authorList>
    </citation>
    <scope>GENOME REANNOTATION</scope>
    <source>
        <strain>cv. Columbia</strain>
    </source>
</reference>
<reference key="3">
    <citation type="journal article" date="2003" name="Science">
        <title>Empirical analysis of transcriptional activity in the Arabidopsis genome.</title>
        <authorList>
            <person name="Yamada K."/>
            <person name="Lim J."/>
            <person name="Dale J.M."/>
            <person name="Chen H."/>
            <person name="Shinn P."/>
            <person name="Palm C.J."/>
            <person name="Southwick A.M."/>
            <person name="Wu H.C."/>
            <person name="Kim C.J."/>
            <person name="Nguyen M."/>
            <person name="Pham P.K."/>
            <person name="Cheuk R.F."/>
            <person name="Karlin-Newmann G."/>
            <person name="Liu S.X."/>
            <person name="Lam B."/>
            <person name="Sakano H."/>
            <person name="Wu T."/>
            <person name="Yu G."/>
            <person name="Miranda M."/>
            <person name="Quach H.L."/>
            <person name="Tripp M."/>
            <person name="Chang C.H."/>
            <person name="Lee J.M."/>
            <person name="Toriumi M.J."/>
            <person name="Chan M.M."/>
            <person name="Tang C.C."/>
            <person name="Onodera C.S."/>
            <person name="Deng J.M."/>
            <person name="Akiyama K."/>
            <person name="Ansari Y."/>
            <person name="Arakawa T."/>
            <person name="Banh J."/>
            <person name="Banno F."/>
            <person name="Bowser L."/>
            <person name="Brooks S.Y."/>
            <person name="Carninci P."/>
            <person name="Chao Q."/>
            <person name="Choy N."/>
            <person name="Enju A."/>
            <person name="Goldsmith A.D."/>
            <person name="Gurjal M."/>
            <person name="Hansen N.F."/>
            <person name="Hayashizaki Y."/>
            <person name="Johnson-Hopson C."/>
            <person name="Hsuan V.W."/>
            <person name="Iida K."/>
            <person name="Karnes M."/>
            <person name="Khan S."/>
            <person name="Koesema E."/>
            <person name="Ishida J."/>
            <person name="Jiang P.X."/>
            <person name="Jones T."/>
            <person name="Kawai J."/>
            <person name="Kamiya A."/>
            <person name="Meyers C."/>
            <person name="Nakajima M."/>
            <person name="Narusaka M."/>
            <person name="Seki M."/>
            <person name="Sakurai T."/>
            <person name="Satou M."/>
            <person name="Tamse R."/>
            <person name="Vaysberg M."/>
            <person name="Wallender E.K."/>
            <person name="Wong C."/>
            <person name="Yamamura Y."/>
            <person name="Yuan S."/>
            <person name="Shinozaki K."/>
            <person name="Davis R.W."/>
            <person name="Theologis A."/>
            <person name="Ecker J.R."/>
        </authorList>
    </citation>
    <scope>NUCLEOTIDE SEQUENCE [LARGE SCALE MRNA]</scope>
    <source>
        <strain>cv. Columbia</strain>
    </source>
</reference>
<feature type="chain" id="PRO_0000156135" description="Probable diphthine methyl ester synthase">
    <location>
        <begin position="1"/>
        <end position="277"/>
    </location>
</feature>
<feature type="binding site" evidence="1">
    <location>
        <position position="9"/>
    </location>
    <ligand>
        <name>S-adenosyl-L-methionine</name>
        <dbReference type="ChEBI" id="CHEBI:59789"/>
    </ligand>
</feature>
<feature type="binding site" evidence="1">
    <location>
        <position position="89"/>
    </location>
    <ligand>
        <name>S-adenosyl-L-methionine</name>
        <dbReference type="ChEBI" id="CHEBI:59789"/>
    </ligand>
</feature>
<feature type="binding site" evidence="1">
    <location>
        <position position="92"/>
    </location>
    <ligand>
        <name>S-adenosyl-L-methionine</name>
        <dbReference type="ChEBI" id="CHEBI:59789"/>
    </ligand>
</feature>
<feature type="binding site" evidence="1">
    <location>
        <begin position="117"/>
        <end position="118"/>
    </location>
    <ligand>
        <name>S-adenosyl-L-methionine</name>
        <dbReference type="ChEBI" id="CHEBI:59789"/>
    </ligand>
</feature>
<feature type="binding site" evidence="1">
    <location>
        <position position="168"/>
    </location>
    <ligand>
        <name>S-adenosyl-L-methionine</name>
        <dbReference type="ChEBI" id="CHEBI:59789"/>
    </ligand>
</feature>
<feature type="binding site" evidence="1">
    <location>
        <position position="227"/>
    </location>
    <ligand>
        <name>S-adenosyl-L-methionine</name>
        <dbReference type="ChEBI" id="CHEBI:59789"/>
    </ligand>
</feature>
<feature type="binding site" evidence="1">
    <location>
        <position position="252"/>
    </location>
    <ligand>
        <name>S-adenosyl-L-methionine</name>
        <dbReference type="ChEBI" id="CHEBI:59789"/>
    </ligand>
</feature>